<name>PYRK_METMA</name>
<dbReference type="EMBL" id="AE008384">
    <property type="protein sequence ID" value="AAM31442.1"/>
    <property type="molecule type" value="Genomic_DNA"/>
</dbReference>
<dbReference type="RefSeq" id="WP_011033686.1">
    <property type="nucleotide sequence ID" value="NC_003901.1"/>
</dbReference>
<dbReference type="SMR" id="Q8PW55"/>
<dbReference type="DNASU" id="1480088"/>
<dbReference type="KEGG" id="mma:MM_1746"/>
<dbReference type="PATRIC" id="fig|192952.21.peg.2022"/>
<dbReference type="eggNOG" id="arCOG02199">
    <property type="taxonomic scope" value="Archaea"/>
</dbReference>
<dbReference type="HOGENOM" id="CLU_003827_1_1_2"/>
<dbReference type="UniPathway" id="UPA00070">
    <property type="reaction ID" value="UER00945"/>
</dbReference>
<dbReference type="Proteomes" id="UP000000595">
    <property type="component" value="Chromosome"/>
</dbReference>
<dbReference type="GO" id="GO:0051537">
    <property type="term" value="F:2 iron, 2 sulfur cluster binding"/>
    <property type="evidence" value="ECO:0007669"/>
    <property type="project" value="UniProtKB-KW"/>
</dbReference>
<dbReference type="GO" id="GO:0009055">
    <property type="term" value="F:electron transfer activity"/>
    <property type="evidence" value="ECO:0007669"/>
    <property type="project" value="UniProtKB-UniRule"/>
</dbReference>
<dbReference type="GO" id="GO:0050660">
    <property type="term" value="F:flavin adenine dinucleotide binding"/>
    <property type="evidence" value="ECO:0007669"/>
    <property type="project" value="InterPro"/>
</dbReference>
<dbReference type="GO" id="GO:0046872">
    <property type="term" value="F:metal ion binding"/>
    <property type="evidence" value="ECO:0007669"/>
    <property type="project" value="UniProtKB-KW"/>
</dbReference>
<dbReference type="GO" id="GO:0016491">
    <property type="term" value="F:oxidoreductase activity"/>
    <property type="evidence" value="ECO:0007669"/>
    <property type="project" value="InterPro"/>
</dbReference>
<dbReference type="GO" id="GO:0044205">
    <property type="term" value="P:'de novo' UMP biosynthetic process"/>
    <property type="evidence" value="ECO:0007669"/>
    <property type="project" value="UniProtKB-UniRule"/>
</dbReference>
<dbReference type="CDD" id="cd06220">
    <property type="entry name" value="DHOD_e_trans_like2"/>
    <property type="match status" value="1"/>
</dbReference>
<dbReference type="Gene3D" id="2.10.240.10">
    <property type="entry name" value="Dihydroorotate dehydrogenase, electron transfer subunit"/>
    <property type="match status" value="1"/>
</dbReference>
<dbReference type="Gene3D" id="3.40.50.80">
    <property type="entry name" value="Nucleotide-binding domain of ferredoxin-NADP reductase (FNR) module"/>
    <property type="match status" value="1"/>
</dbReference>
<dbReference type="Gene3D" id="2.40.30.10">
    <property type="entry name" value="Translation factors"/>
    <property type="match status" value="1"/>
</dbReference>
<dbReference type="HAMAP" id="MF_01211">
    <property type="entry name" value="DHODB_Fe_S_bind"/>
    <property type="match status" value="1"/>
</dbReference>
<dbReference type="InterPro" id="IPR012165">
    <property type="entry name" value="Cyt_c3_hydrogenase_gsu"/>
</dbReference>
<dbReference type="InterPro" id="IPR037117">
    <property type="entry name" value="Dihydroorotate_DH_ele_sf"/>
</dbReference>
<dbReference type="InterPro" id="IPR019480">
    <property type="entry name" value="Dihydroorotate_DH_Fe-S-bd"/>
</dbReference>
<dbReference type="InterPro" id="IPR023455">
    <property type="entry name" value="Dihydroorotate_DHASE_ETsu"/>
</dbReference>
<dbReference type="InterPro" id="IPR017927">
    <property type="entry name" value="FAD-bd_FR_type"/>
</dbReference>
<dbReference type="InterPro" id="IPR039261">
    <property type="entry name" value="FNR_nucleotide-bd"/>
</dbReference>
<dbReference type="InterPro" id="IPR001433">
    <property type="entry name" value="OxRdtase_FAD/NAD-bd"/>
</dbReference>
<dbReference type="InterPro" id="IPR050353">
    <property type="entry name" value="PyrK_electron_transfer"/>
</dbReference>
<dbReference type="InterPro" id="IPR017938">
    <property type="entry name" value="Riboflavin_synthase-like_b-brl"/>
</dbReference>
<dbReference type="NCBIfam" id="NF000796">
    <property type="entry name" value="PRK00054.1-1"/>
    <property type="match status" value="1"/>
</dbReference>
<dbReference type="PANTHER" id="PTHR43513">
    <property type="entry name" value="DIHYDROOROTATE DEHYDROGENASE B (NAD(+)), ELECTRON TRANSFER SUBUNIT"/>
    <property type="match status" value="1"/>
</dbReference>
<dbReference type="PANTHER" id="PTHR43513:SF3">
    <property type="entry name" value="DIHYDROOROTATE DEHYDROGENASE B (NAD(+)), ELECTRON TRANSFER SUBUNIT-RELATED"/>
    <property type="match status" value="1"/>
</dbReference>
<dbReference type="Pfam" id="PF10418">
    <property type="entry name" value="DHODB_Fe-S_bind"/>
    <property type="match status" value="1"/>
</dbReference>
<dbReference type="Pfam" id="PF00175">
    <property type="entry name" value="NAD_binding_1"/>
    <property type="match status" value="1"/>
</dbReference>
<dbReference type="PIRSF" id="PIRSF006816">
    <property type="entry name" value="Cyc3_hyd_g"/>
    <property type="match status" value="1"/>
</dbReference>
<dbReference type="SUPFAM" id="SSF52343">
    <property type="entry name" value="Ferredoxin reductase-like, C-terminal NADP-linked domain"/>
    <property type="match status" value="1"/>
</dbReference>
<dbReference type="SUPFAM" id="SSF63380">
    <property type="entry name" value="Riboflavin synthase domain-like"/>
    <property type="match status" value="1"/>
</dbReference>
<dbReference type="PROSITE" id="PS00197">
    <property type="entry name" value="2FE2S_FER_1"/>
    <property type="match status" value="1"/>
</dbReference>
<dbReference type="PROSITE" id="PS51384">
    <property type="entry name" value="FAD_FR"/>
    <property type="match status" value="1"/>
</dbReference>
<proteinExistence type="inferred from homology"/>
<accession>Q8PW55</accession>
<sequence length="259" mass="28187">MLPLNATITQIIEESPLIRTFFFDHKFEDMEPGQFVMVWVRGVDEVPMGLSRNNSITVQKVGEATSKLFELKEGDSFGLRGPFGKGFTLPAKGEKVLIIAGGVGAAPLSPYAEAAFAAGAEVNTVLGARSEEHLLFEGRFEALGTVYVSTDDGSKGFKGFVTDVLKNLDVTSYDRIAVCGPEIMMASVFRFLEEREVLEKSEFSLHRYFKCGIGVCGACCIDRSGLRVCKDGPVFSGTQLIGSELGKYSRDASGRRVKI</sequence>
<feature type="chain" id="PRO_0000148377" description="Probable dihydroorotate dehydrogenase B (NAD(+)), electron transfer subunit">
    <location>
        <begin position="1"/>
        <end position="259"/>
    </location>
</feature>
<feature type="domain" description="FAD-binding FR-type" evidence="1">
    <location>
        <begin position="1"/>
        <end position="89"/>
    </location>
</feature>
<feature type="binding site" evidence="1">
    <location>
        <position position="211"/>
    </location>
    <ligand>
        <name>[2Fe-2S] cluster</name>
        <dbReference type="ChEBI" id="CHEBI:190135"/>
    </ligand>
</feature>
<feature type="binding site" evidence="1">
    <location>
        <position position="216"/>
    </location>
    <ligand>
        <name>[2Fe-2S] cluster</name>
        <dbReference type="ChEBI" id="CHEBI:190135"/>
    </ligand>
</feature>
<feature type="binding site" evidence="1">
    <location>
        <position position="219"/>
    </location>
    <ligand>
        <name>[2Fe-2S] cluster</name>
        <dbReference type="ChEBI" id="CHEBI:190135"/>
    </ligand>
</feature>
<feature type="binding site" evidence="1">
    <location>
        <position position="229"/>
    </location>
    <ligand>
        <name>[2Fe-2S] cluster</name>
        <dbReference type="ChEBI" id="CHEBI:190135"/>
    </ligand>
</feature>
<keyword id="KW-0001">2Fe-2S</keyword>
<keyword id="KW-0249">Electron transport</keyword>
<keyword id="KW-0274">FAD</keyword>
<keyword id="KW-0285">Flavoprotein</keyword>
<keyword id="KW-0408">Iron</keyword>
<keyword id="KW-0411">Iron-sulfur</keyword>
<keyword id="KW-0479">Metal-binding</keyword>
<keyword id="KW-0665">Pyrimidine biosynthesis</keyword>
<keyword id="KW-0813">Transport</keyword>
<evidence type="ECO:0000255" key="1">
    <source>
        <dbReference type="HAMAP-Rule" id="MF_01211"/>
    </source>
</evidence>
<organism>
    <name type="scientific">Methanosarcina mazei (strain ATCC BAA-159 / DSM 3647 / Goe1 / Go1 / JCM 11833 / OCM 88)</name>
    <name type="common">Methanosarcina frisia</name>
    <dbReference type="NCBI Taxonomy" id="192952"/>
    <lineage>
        <taxon>Archaea</taxon>
        <taxon>Methanobacteriati</taxon>
        <taxon>Methanobacteriota</taxon>
        <taxon>Stenosarchaea group</taxon>
        <taxon>Methanomicrobia</taxon>
        <taxon>Methanosarcinales</taxon>
        <taxon>Methanosarcinaceae</taxon>
        <taxon>Methanosarcina</taxon>
    </lineage>
</organism>
<gene>
    <name evidence="1" type="primary">pyrK</name>
    <name type="ordered locus">MM_1746</name>
</gene>
<reference key="1">
    <citation type="journal article" date="2002" name="J. Mol. Microbiol. Biotechnol.">
        <title>The genome of Methanosarcina mazei: evidence for lateral gene transfer between Bacteria and Archaea.</title>
        <authorList>
            <person name="Deppenmeier U."/>
            <person name="Johann A."/>
            <person name="Hartsch T."/>
            <person name="Merkl R."/>
            <person name="Schmitz R.A."/>
            <person name="Martinez-Arias R."/>
            <person name="Henne A."/>
            <person name="Wiezer A."/>
            <person name="Baeumer S."/>
            <person name="Jacobi C."/>
            <person name="Brueggemann H."/>
            <person name="Lienard T."/>
            <person name="Christmann A."/>
            <person name="Boemecke M."/>
            <person name="Steckel S."/>
            <person name="Bhattacharyya A."/>
            <person name="Lykidis A."/>
            <person name="Overbeek R."/>
            <person name="Klenk H.-P."/>
            <person name="Gunsalus R.P."/>
            <person name="Fritz H.-J."/>
            <person name="Gottschalk G."/>
        </authorList>
    </citation>
    <scope>NUCLEOTIDE SEQUENCE [LARGE SCALE GENOMIC DNA]</scope>
    <source>
        <strain>ATCC BAA-159 / DSM 3647 / Goe1 / Go1 / JCM 11833 / OCM 88</strain>
    </source>
</reference>
<protein>
    <recommendedName>
        <fullName evidence="1">Probable dihydroorotate dehydrogenase B (NAD(+)), electron transfer subunit</fullName>
    </recommendedName>
    <alternativeName>
        <fullName evidence="1">Dihydroorotate oxidase B, electron transfer subunit</fullName>
    </alternativeName>
</protein>
<comment type="function">
    <text evidence="1">Responsible for channeling the electrons from the oxidation of dihydroorotate from the FMN redox center in the PyrD type B subunit to the ultimate electron acceptor NAD(+).</text>
</comment>
<comment type="cofactor">
    <cofactor evidence="1">
        <name>[2Fe-2S] cluster</name>
        <dbReference type="ChEBI" id="CHEBI:190135"/>
    </cofactor>
    <text evidence="1">Binds 1 [2Fe-2S] cluster per subunit.</text>
</comment>
<comment type="cofactor">
    <cofactor evidence="1">
        <name>FAD</name>
        <dbReference type="ChEBI" id="CHEBI:57692"/>
    </cofactor>
    <text evidence="1">Binds 1 FAD per subunit.</text>
</comment>
<comment type="pathway">
    <text evidence="1">Pyrimidine metabolism; UMP biosynthesis via de novo pathway; orotate from (S)-dihydroorotate (NAD(+) route): step 1/1.</text>
</comment>
<comment type="subunit">
    <text evidence="1">Heterotetramer of 2 PyrK and 2 PyrD type B subunits.</text>
</comment>
<comment type="similarity">
    <text evidence="1">Belongs to the PyrK family.</text>
</comment>